<sequence length="377" mass="41706">MADGEDIQPLVCDNGTGMVKAGFAGDDAPRAVFPSIVGRPRHTGVMVGMGQKDAYVGDEAQSKRGILTLKYPIEHGIVNNWDDMEKIWHHTFYNELRVAPEEHPILLTEAPLNPKANREKMTQIMFETFNAPAMYVAIQAVLSLYASGRTTGIVLDSGDGVTHTVPIYEGYALPHAILRLDLAGRDLTDCLMKILTERGYSFTTTAEREIVRDIKEKLAYIALDYEQELETAKSSSSVEKSYELPDGQVITIGAERFRCPEVLFQPSLIGMEAPGIHETTYNSIMKCDVDIRKDLYGNIVLSGGTTMFPGIADRMSKEITALAPSSMKIKVVAPPERKYSVWIGGSILASLSTFQQMWISKGEYDESGPSIVHRKCF</sequence>
<organism>
    <name type="scientific">Oryza sativa subsp. indica</name>
    <name type="common">Rice</name>
    <dbReference type="NCBI Taxonomy" id="39946"/>
    <lineage>
        <taxon>Eukaryota</taxon>
        <taxon>Viridiplantae</taxon>
        <taxon>Streptophyta</taxon>
        <taxon>Embryophyta</taxon>
        <taxon>Tracheophyta</taxon>
        <taxon>Spermatophyta</taxon>
        <taxon>Magnoliopsida</taxon>
        <taxon>Liliopsida</taxon>
        <taxon>Poales</taxon>
        <taxon>Poaceae</taxon>
        <taxon>BOP clade</taxon>
        <taxon>Oryzoideae</taxon>
        <taxon>Oryzeae</taxon>
        <taxon>Oryzinae</taxon>
        <taxon>Oryza</taxon>
        <taxon>Oryza sativa</taxon>
    </lineage>
</organism>
<name>ACT3_ORYSI</name>
<comment type="function">
    <text>Actins are highly conserved proteins that are involved in various types of cell motility and are ubiquitously expressed in all eukaryotic cells.</text>
</comment>
<comment type="function">
    <text>Essential component of cell cytoskeleton; plays an important role in cytoplasmic streaming, cell shape determination, cell division, organelle movement and extension growth.</text>
</comment>
<comment type="catalytic activity">
    <reaction evidence="1">
        <text>ATP + H2O = ADP + phosphate + H(+)</text>
        <dbReference type="Rhea" id="RHEA:13065"/>
        <dbReference type="ChEBI" id="CHEBI:15377"/>
        <dbReference type="ChEBI" id="CHEBI:15378"/>
        <dbReference type="ChEBI" id="CHEBI:30616"/>
        <dbReference type="ChEBI" id="CHEBI:43474"/>
        <dbReference type="ChEBI" id="CHEBI:456216"/>
    </reaction>
</comment>
<comment type="subcellular location">
    <subcellularLocation>
        <location>Cytoplasm</location>
        <location>Cytoskeleton</location>
    </subcellularLocation>
</comment>
<comment type="miscellaneous">
    <text>There are at least eight actin genes in rice.</text>
</comment>
<comment type="similarity">
    <text evidence="2">Belongs to the actin family.</text>
</comment>
<keyword id="KW-0067">ATP-binding</keyword>
<keyword id="KW-0963">Cytoplasm</keyword>
<keyword id="KW-0206">Cytoskeleton</keyword>
<keyword id="KW-0378">Hydrolase</keyword>
<keyword id="KW-0547">Nucleotide-binding</keyword>
<keyword id="KW-1185">Reference proteome</keyword>
<accession>A2XNS1</accession>
<accession>P17299</accession>
<accession>Q75LK6</accession>
<protein>
    <recommendedName>
        <fullName>Actin-3</fullName>
        <ecNumber evidence="1">3.6.4.-</ecNumber>
    </recommendedName>
</protein>
<reference key="1">
    <citation type="journal article" date="1990" name="Plant Mol. Biol.">
        <title>Genomic nucleotide sequence of four rice (Oryza sativa) actin genes.</title>
        <authorList>
            <person name="Reece K.S."/>
            <person name="McElroy D."/>
            <person name="Wu R."/>
        </authorList>
    </citation>
    <scope>NUCLEOTIDE SEQUENCE [GENOMIC DNA]</scope>
    <source>
        <strain>cv. IR36</strain>
    </source>
</reference>
<reference key="2">
    <citation type="journal article" date="2005" name="PLoS Biol.">
        <title>The genomes of Oryza sativa: a history of duplications.</title>
        <authorList>
            <person name="Yu J."/>
            <person name="Wang J."/>
            <person name="Lin W."/>
            <person name="Li S."/>
            <person name="Li H."/>
            <person name="Zhou J."/>
            <person name="Ni P."/>
            <person name="Dong W."/>
            <person name="Hu S."/>
            <person name="Zeng C."/>
            <person name="Zhang J."/>
            <person name="Zhang Y."/>
            <person name="Li R."/>
            <person name="Xu Z."/>
            <person name="Li S."/>
            <person name="Li X."/>
            <person name="Zheng H."/>
            <person name="Cong L."/>
            <person name="Lin L."/>
            <person name="Yin J."/>
            <person name="Geng J."/>
            <person name="Li G."/>
            <person name="Shi J."/>
            <person name="Liu J."/>
            <person name="Lv H."/>
            <person name="Li J."/>
            <person name="Wang J."/>
            <person name="Deng Y."/>
            <person name="Ran L."/>
            <person name="Shi X."/>
            <person name="Wang X."/>
            <person name="Wu Q."/>
            <person name="Li C."/>
            <person name="Ren X."/>
            <person name="Wang J."/>
            <person name="Wang X."/>
            <person name="Li D."/>
            <person name="Liu D."/>
            <person name="Zhang X."/>
            <person name="Ji Z."/>
            <person name="Zhao W."/>
            <person name="Sun Y."/>
            <person name="Zhang Z."/>
            <person name="Bao J."/>
            <person name="Han Y."/>
            <person name="Dong L."/>
            <person name="Ji J."/>
            <person name="Chen P."/>
            <person name="Wu S."/>
            <person name="Liu J."/>
            <person name="Xiao Y."/>
            <person name="Bu D."/>
            <person name="Tan J."/>
            <person name="Yang L."/>
            <person name="Ye C."/>
            <person name="Zhang J."/>
            <person name="Xu J."/>
            <person name="Zhou Y."/>
            <person name="Yu Y."/>
            <person name="Zhang B."/>
            <person name="Zhuang S."/>
            <person name="Wei H."/>
            <person name="Liu B."/>
            <person name="Lei M."/>
            <person name="Yu H."/>
            <person name="Li Y."/>
            <person name="Xu H."/>
            <person name="Wei S."/>
            <person name="He X."/>
            <person name="Fang L."/>
            <person name="Zhang Z."/>
            <person name="Zhang Y."/>
            <person name="Huang X."/>
            <person name="Su Z."/>
            <person name="Tong W."/>
            <person name="Li J."/>
            <person name="Tong Z."/>
            <person name="Li S."/>
            <person name="Ye J."/>
            <person name="Wang L."/>
            <person name="Fang L."/>
            <person name="Lei T."/>
            <person name="Chen C.-S."/>
            <person name="Chen H.-C."/>
            <person name="Xu Z."/>
            <person name="Li H."/>
            <person name="Huang H."/>
            <person name="Zhang F."/>
            <person name="Xu H."/>
            <person name="Li N."/>
            <person name="Zhao C."/>
            <person name="Li S."/>
            <person name="Dong L."/>
            <person name="Huang Y."/>
            <person name="Li L."/>
            <person name="Xi Y."/>
            <person name="Qi Q."/>
            <person name="Li W."/>
            <person name="Zhang B."/>
            <person name="Hu W."/>
            <person name="Zhang Y."/>
            <person name="Tian X."/>
            <person name="Jiao Y."/>
            <person name="Liang X."/>
            <person name="Jin J."/>
            <person name="Gao L."/>
            <person name="Zheng W."/>
            <person name="Hao B."/>
            <person name="Liu S.-M."/>
            <person name="Wang W."/>
            <person name="Yuan L."/>
            <person name="Cao M."/>
            <person name="McDermott J."/>
            <person name="Samudrala R."/>
            <person name="Wang J."/>
            <person name="Wong G.K.-S."/>
            <person name="Yang H."/>
        </authorList>
    </citation>
    <scope>NUCLEOTIDE SEQUENCE [LARGE SCALE GENOMIC DNA]</scope>
    <source>
        <strain>cv. 93-11</strain>
    </source>
</reference>
<reference key="3">
    <citation type="journal article" date="1990" name="Plant Mol. Biol.">
        <title>Characterization of the rice (Oryza sativa) actin gene family.</title>
        <authorList>
            <person name="McElroy D."/>
            <person name="Rothenberg M."/>
            <person name="Reece K.S."/>
            <person name="Wu R."/>
        </authorList>
    </citation>
    <scope>GENE FAMILY</scope>
</reference>
<evidence type="ECO:0000250" key="1">
    <source>
        <dbReference type="UniProtKB" id="P68137"/>
    </source>
</evidence>
<evidence type="ECO:0000305" key="2"/>
<gene>
    <name type="primary">ACT3</name>
    <name type="synonym">AC3</name>
    <name type="synonym">RAC3</name>
    <name type="ORF">OsI_013714</name>
</gene>
<proteinExistence type="inferred from homology"/>
<dbReference type="EC" id="3.6.4.-" evidence="1"/>
<dbReference type="EMBL" id="X15862">
    <property type="protein sequence ID" value="CAA33871.1"/>
    <property type="molecule type" value="Genomic_DNA"/>
</dbReference>
<dbReference type="EMBL" id="CM000128">
    <property type="status" value="NOT_ANNOTATED_CDS"/>
    <property type="molecule type" value="Genomic_DNA"/>
</dbReference>
<dbReference type="PIR" id="S10022">
    <property type="entry name" value="ATRZ3"/>
</dbReference>
<dbReference type="SMR" id="A2XNS1"/>
<dbReference type="STRING" id="39946.A2XNS1"/>
<dbReference type="EnsemblPlants" id="BGIOSGA009494-TA">
    <property type="protein sequence ID" value="BGIOSGA009494-PA"/>
    <property type="gene ID" value="BGIOSGA009494"/>
</dbReference>
<dbReference type="EnsemblPlants" id="OsGoSa_03g0040580.01">
    <property type="protein sequence ID" value="OsGoSa_03g0040580.01"/>
    <property type="gene ID" value="OsGoSa_03g0040580"/>
</dbReference>
<dbReference type="EnsemblPlants" id="OsIR64_03g0040410.01">
    <property type="protein sequence ID" value="OsIR64_03g0040410.01"/>
    <property type="gene ID" value="OsIR64_03g0040410"/>
</dbReference>
<dbReference type="EnsemblPlants" id="OsKYG_03g0040900.01">
    <property type="protein sequence ID" value="OsKYG_03g0040900.01"/>
    <property type="gene ID" value="OsKYG_03g0040900"/>
</dbReference>
<dbReference type="EnsemblPlants" id="OsLaMu_03g0040700.01">
    <property type="protein sequence ID" value="OsLaMu_03g0040700.01"/>
    <property type="gene ID" value="OsLaMu_03g0040700"/>
</dbReference>
<dbReference type="EnsemblPlants" id="OsLima_03g0040990.01">
    <property type="protein sequence ID" value="OsLima_03g0040990.01"/>
    <property type="gene ID" value="OsLima_03g0040990"/>
</dbReference>
<dbReference type="EnsemblPlants" id="OsLiXu_03g0040640.01">
    <property type="protein sequence ID" value="OsLiXu_03g0040640.01"/>
    <property type="gene ID" value="OsLiXu_03g0040640"/>
</dbReference>
<dbReference type="EnsemblPlants" id="OsMH63_03G040630_01">
    <property type="protein sequence ID" value="OsMH63_03G040630_01"/>
    <property type="gene ID" value="OsMH63_03G040630"/>
</dbReference>
<dbReference type="EnsemblPlants" id="OsPr106_03g0040650.01">
    <property type="protein sequence ID" value="OsPr106_03g0040650.01"/>
    <property type="gene ID" value="OsPr106_03g0040650"/>
</dbReference>
<dbReference type="EnsemblPlants" id="OsZS97_03G040610_01">
    <property type="protein sequence ID" value="OsZS97_03G040610_01"/>
    <property type="gene ID" value="OsZS97_03G040610"/>
</dbReference>
<dbReference type="Gramene" id="BGIOSGA009494-TA">
    <property type="protein sequence ID" value="BGIOSGA009494-PA"/>
    <property type="gene ID" value="BGIOSGA009494"/>
</dbReference>
<dbReference type="Gramene" id="OsGoSa_03g0040580.01">
    <property type="protein sequence ID" value="OsGoSa_03g0040580.01"/>
    <property type="gene ID" value="OsGoSa_03g0040580"/>
</dbReference>
<dbReference type="Gramene" id="OsIR64_03g0040410.01">
    <property type="protein sequence ID" value="OsIR64_03g0040410.01"/>
    <property type="gene ID" value="OsIR64_03g0040410"/>
</dbReference>
<dbReference type="Gramene" id="OsKYG_03g0040900.01">
    <property type="protein sequence ID" value="OsKYG_03g0040900.01"/>
    <property type="gene ID" value="OsKYG_03g0040900"/>
</dbReference>
<dbReference type="Gramene" id="OsLaMu_03g0040700.01">
    <property type="protein sequence ID" value="OsLaMu_03g0040700.01"/>
    <property type="gene ID" value="OsLaMu_03g0040700"/>
</dbReference>
<dbReference type="Gramene" id="OsLima_03g0040990.01">
    <property type="protein sequence ID" value="OsLima_03g0040990.01"/>
    <property type="gene ID" value="OsLima_03g0040990"/>
</dbReference>
<dbReference type="Gramene" id="OsLiXu_03g0040640.01">
    <property type="protein sequence ID" value="OsLiXu_03g0040640.01"/>
    <property type="gene ID" value="OsLiXu_03g0040640"/>
</dbReference>
<dbReference type="Gramene" id="OsMH63_03G040630_01">
    <property type="protein sequence ID" value="OsMH63_03G040630_01"/>
    <property type="gene ID" value="OsMH63_03G040630"/>
</dbReference>
<dbReference type="Gramene" id="OsPr106_03g0040650.01">
    <property type="protein sequence ID" value="OsPr106_03g0040650.01"/>
    <property type="gene ID" value="OsPr106_03g0040650"/>
</dbReference>
<dbReference type="Gramene" id="OsZS97_03G040610_01">
    <property type="protein sequence ID" value="OsZS97_03G040610_01"/>
    <property type="gene ID" value="OsZS97_03G040610"/>
</dbReference>
<dbReference type="HOGENOM" id="CLU_027965_0_2_1"/>
<dbReference type="OMA" id="FHAPAMY"/>
<dbReference type="OrthoDB" id="503831at2759"/>
<dbReference type="Proteomes" id="UP000007015">
    <property type="component" value="Chromosome 3"/>
</dbReference>
<dbReference type="GO" id="GO:0005737">
    <property type="term" value="C:cytoplasm"/>
    <property type="evidence" value="ECO:0007669"/>
    <property type="project" value="UniProtKB-KW"/>
</dbReference>
<dbReference type="GO" id="GO:0005856">
    <property type="term" value="C:cytoskeleton"/>
    <property type="evidence" value="ECO:0007669"/>
    <property type="project" value="UniProtKB-SubCell"/>
</dbReference>
<dbReference type="GO" id="GO:0005524">
    <property type="term" value="F:ATP binding"/>
    <property type="evidence" value="ECO:0007669"/>
    <property type="project" value="UniProtKB-KW"/>
</dbReference>
<dbReference type="GO" id="GO:0016787">
    <property type="term" value="F:hydrolase activity"/>
    <property type="evidence" value="ECO:0007669"/>
    <property type="project" value="UniProtKB-KW"/>
</dbReference>
<dbReference type="CDD" id="cd10224">
    <property type="entry name" value="ASKHA_NBD_actin"/>
    <property type="match status" value="1"/>
</dbReference>
<dbReference type="FunFam" id="3.30.420.40:FF:000291">
    <property type="entry name" value="Actin, alpha skeletal muscle"/>
    <property type="match status" value="1"/>
</dbReference>
<dbReference type="FunFam" id="3.90.640.10:FF:000001">
    <property type="entry name" value="Actin, muscle"/>
    <property type="match status" value="1"/>
</dbReference>
<dbReference type="FunFam" id="3.30.420.40:FF:000404">
    <property type="entry name" value="Major actin"/>
    <property type="match status" value="1"/>
</dbReference>
<dbReference type="FunFam" id="3.30.420.40:FF:000058">
    <property type="entry name" value="Putative actin-related protein 5"/>
    <property type="match status" value="1"/>
</dbReference>
<dbReference type="Gene3D" id="3.30.420.40">
    <property type="match status" value="2"/>
</dbReference>
<dbReference type="Gene3D" id="3.90.640.10">
    <property type="entry name" value="Actin, Chain A, domain 4"/>
    <property type="match status" value="1"/>
</dbReference>
<dbReference type="InterPro" id="IPR004000">
    <property type="entry name" value="Actin"/>
</dbReference>
<dbReference type="InterPro" id="IPR020902">
    <property type="entry name" value="Actin/actin-like_CS"/>
</dbReference>
<dbReference type="InterPro" id="IPR004001">
    <property type="entry name" value="Actin_CS"/>
</dbReference>
<dbReference type="InterPro" id="IPR043129">
    <property type="entry name" value="ATPase_NBD"/>
</dbReference>
<dbReference type="PANTHER" id="PTHR11937">
    <property type="entry name" value="ACTIN"/>
    <property type="match status" value="1"/>
</dbReference>
<dbReference type="Pfam" id="PF00022">
    <property type="entry name" value="Actin"/>
    <property type="match status" value="1"/>
</dbReference>
<dbReference type="PRINTS" id="PR00190">
    <property type="entry name" value="ACTIN"/>
</dbReference>
<dbReference type="SMART" id="SM00268">
    <property type="entry name" value="ACTIN"/>
    <property type="match status" value="1"/>
</dbReference>
<dbReference type="SUPFAM" id="SSF53067">
    <property type="entry name" value="Actin-like ATPase domain"/>
    <property type="match status" value="2"/>
</dbReference>
<dbReference type="PROSITE" id="PS00406">
    <property type="entry name" value="ACTINS_1"/>
    <property type="match status" value="1"/>
</dbReference>
<dbReference type="PROSITE" id="PS00432">
    <property type="entry name" value="ACTINS_2"/>
    <property type="match status" value="1"/>
</dbReference>
<dbReference type="PROSITE" id="PS01132">
    <property type="entry name" value="ACTINS_ACT_LIKE"/>
    <property type="match status" value="1"/>
</dbReference>
<feature type="chain" id="PRO_0000291393" description="Actin-3">
    <location>
        <begin position="1"/>
        <end position="377"/>
    </location>
</feature>
<feature type="sequence conflict" description="In Ref. 1; CAA33871." evidence="2" ref="1">
    <original>D</original>
    <variation>M</variation>
    <location>
        <position position="6"/>
    </location>
</feature>
<feature type="sequence conflict" description="In Ref. 1; CAA33871." evidence="2" ref="1">
    <original>R</original>
    <variation>Q</variation>
    <location>
        <position position="39"/>
    </location>
</feature>
<feature type="sequence conflict" description="In Ref. 1; CAA33871." evidence="2" ref="1">
    <original>IV</original>
    <variation>MW</variation>
    <location>
        <begin position="77"/>
        <end position="78"/>
    </location>
</feature>
<feature type="sequence conflict" description="In Ref. 1; CAA33871." evidence="2" ref="1">
    <original>A</original>
    <variation>L</variation>
    <location>
        <position position="99"/>
    </location>
</feature>
<feature type="sequence conflict" description="In Ref. 1; CAA33871." evidence="2" ref="1">
    <original>PK</original>
    <variation>QR</variation>
    <location>
        <begin position="114"/>
        <end position="115"/>
    </location>
</feature>
<feature type="sequence conflict" description="In Ref. 1; CAA33871." evidence="2" ref="1">
    <original>I</original>
    <variation>M</variation>
    <location>
        <position position="153"/>
    </location>
</feature>
<feature type="sequence conflict" description="In Ref. 1; CAA33871." evidence="2" ref="1">
    <original>I</original>
    <variation>S</variation>
    <location>
        <position position="210"/>
    </location>
</feature>
<feature type="sequence conflict" description="In Ref. 1; CAA33871." evidence="2" ref="1">
    <original>ET</original>
    <variation>RV</variation>
    <location>
        <begin position="230"/>
        <end position="231"/>
    </location>
</feature>
<feature type="sequence conflict" description="In Ref. 1; CAA33871." evidence="2" ref="1">
    <original>LP</original>
    <variation>VA</variation>
    <location>
        <begin position="244"/>
        <end position="245"/>
    </location>
</feature>
<feature type="sequence conflict" description="In Ref. 1; CAA33871." evidence="2" ref="1">
    <original>ERFR</original>
    <variation>REVQ</variation>
    <location>
        <begin position="255"/>
        <end position="258"/>
    </location>
</feature>
<feature type="sequence conflict" description="In Ref. 1; CAA33871." evidence="2" ref="1">
    <location>
        <position position="262"/>
    </location>
</feature>
<feature type="sequence conflict" description="In Ref. 1; CAA33871." evidence="2" ref="1">
    <original>I</original>
    <variation>V</variation>
    <location>
        <position position="284"/>
    </location>
</feature>
<feature type="sequence conflict" description="In Ref. 1; CAA33871." evidence="2" ref="1">
    <original>D</original>
    <variation>E</variation>
    <location>
        <position position="288"/>
    </location>
</feature>
<feature type="sequence conflict" description="In Ref. 1; CAA33871." evidence="2" ref="1">
    <original>IT</original>
    <variation>DY</variation>
    <location>
        <begin position="319"/>
        <end position="320"/>
    </location>
</feature>